<name>MNMG_SHEPA</name>
<dbReference type="EMBL" id="CP000851">
    <property type="protein sequence ID" value="ABV89561.1"/>
    <property type="molecule type" value="Genomic_DNA"/>
</dbReference>
<dbReference type="RefSeq" id="WP_012157438.1">
    <property type="nucleotide sequence ID" value="NC_009901.1"/>
</dbReference>
<dbReference type="SMR" id="A8HAH4"/>
<dbReference type="STRING" id="398579.Spea_4251"/>
<dbReference type="KEGG" id="spl:Spea_4251"/>
<dbReference type="eggNOG" id="COG0445">
    <property type="taxonomic scope" value="Bacteria"/>
</dbReference>
<dbReference type="HOGENOM" id="CLU_007831_2_2_6"/>
<dbReference type="OrthoDB" id="9815560at2"/>
<dbReference type="Proteomes" id="UP000002608">
    <property type="component" value="Chromosome"/>
</dbReference>
<dbReference type="GO" id="GO:0005829">
    <property type="term" value="C:cytosol"/>
    <property type="evidence" value="ECO:0007669"/>
    <property type="project" value="TreeGrafter"/>
</dbReference>
<dbReference type="GO" id="GO:0050660">
    <property type="term" value="F:flavin adenine dinucleotide binding"/>
    <property type="evidence" value="ECO:0007669"/>
    <property type="project" value="UniProtKB-UniRule"/>
</dbReference>
<dbReference type="GO" id="GO:0030488">
    <property type="term" value="P:tRNA methylation"/>
    <property type="evidence" value="ECO:0007669"/>
    <property type="project" value="TreeGrafter"/>
</dbReference>
<dbReference type="GO" id="GO:0002098">
    <property type="term" value="P:tRNA wobble uridine modification"/>
    <property type="evidence" value="ECO:0007669"/>
    <property type="project" value="InterPro"/>
</dbReference>
<dbReference type="FunFam" id="1.10.10.1800:FF:000001">
    <property type="entry name" value="tRNA uridine 5-carboxymethylaminomethyl modification enzyme MnmG"/>
    <property type="match status" value="1"/>
</dbReference>
<dbReference type="FunFam" id="1.10.150.570:FF:000001">
    <property type="entry name" value="tRNA uridine 5-carboxymethylaminomethyl modification enzyme MnmG"/>
    <property type="match status" value="1"/>
</dbReference>
<dbReference type="FunFam" id="3.50.50.60:FF:000002">
    <property type="entry name" value="tRNA uridine 5-carboxymethylaminomethyl modification enzyme MnmG"/>
    <property type="match status" value="1"/>
</dbReference>
<dbReference type="FunFam" id="3.50.50.60:FF:000010">
    <property type="entry name" value="tRNA uridine 5-carboxymethylaminomethyl modification enzyme MnmG"/>
    <property type="match status" value="1"/>
</dbReference>
<dbReference type="Gene3D" id="3.50.50.60">
    <property type="entry name" value="FAD/NAD(P)-binding domain"/>
    <property type="match status" value="2"/>
</dbReference>
<dbReference type="Gene3D" id="1.10.150.570">
    <property type="entry name" value="GidA associated domain, C-terminal subdomain"/>
    <property type="match status" value="1"/>
</dbReference>
<dbReference type="Gene3D" id="1.10.10.1800">
    <property type="entry name" value="tRNA uridine 5-carboxymethylaminomethyl modification enzyme MnmG/GidA"/>
    <property type="match status" value="1"/>
</dbReference>
<dbReference type="HAMAP" id="MF_00129">
    <property type="entry name" value="MnmG_GidA"/>
    <property type="match status" value="1"/>
</dbReference>
<dbReference type="InterPro" id="IPR036188">
    <property type="entry name" value="FAD/NAD-bd_sf"/>
</dbReference>
<dbReference type="InterPro" id="IPR049312">
    <property type="entry name" value="GIDA_C_N"/>
</dbReference>
<dbReference type="InterPro" id="IPR004416">
    <property type="entry name" value="MnmG"/>
</dbReference>
<dbReference type="InterPro" id="IPR002218">
    <property type="entry name" value="MnmG-rel"/>
</dbReference>
<dbReference type="InterPro" id="IPR020595">
    <property type="entry name" value="MnmG-rel_CS"/>
</dbReference>
<dbReference type="InterPro" id="IPR026904">
    <property type="entry name" value="MnmG_C"/>
</dbReference>
<dbReference type="InterPro" id="IPR047001">
    <property type="entry name" value="MnmG_C_subdom"/>
</dbReference>
<dbReference type="InterPro" id="IPR044920">
    <property type="entry name" value="MnmG_C_subdom_sf"/>
</dbReference>
<dbReference type="InterPro" id="IPR040131">
    <property type="entry name" value="MnmG_N"/>
</dbReference>
<dbReference type="NCBIfam" id="TIGR00136">
    <property type="entry name" value="mnmG_gidA"/>
    <property type="match status" value="1"/>
</dbReference>
<dbReference type="PANTHER" id="PTHR11806">
    <property type="entry name" value="GLUCOSE INHIBITED DIVISION PROTEIN A"/>
    <property type="match status" value="1"/>
</dbReference>
<dbReference type="PANTHER" id="PTHR11806:SF0">
    <property type="entry name" value="PROTEIN MTO1 HOMOLOG, MITOCHONDRIAL"/>
    <property type="match status" value="1"/>
</dbReference>
<dbReference type="Pfam" id="PF01134">
    <property type="entry name" value="GIDA"/>
    <property type="match status" value="1"/>
</dbReference>
<dbReference type="Pfam" id="PF21680">
    <property type="entry name" value="GIDA_C_1st"/>
    <property type="match status" value="1"/>
</dbReference>
<dbReference type="Pfam" id="PF13932">
    <property type="entry name" value="SAM_GIDA_C"/>
    <property type="match status" value="1"/>
</dbReference>
<dbReference type="SMART" id="SM01228">
    <property type="entry name" value="GIDA_assoc_3"/>
    <property type="match status" value="1"/>
</dbReference>
<dbReference type="SUPFAM" id="SSF51905">
    <property type="entry name" value="FAD/NAD(P)-binding domain"/>
    <property type="match status" value="1"/>
</dbReference>
<dbReference type="PROSITE" id="PS01280">
    <property type="entry name" value="GIDA_1"/>
    <property type="match status" value="1"/>
</dbReference>
<dbReference type="PROSITE" id="PS01281">
    <property type="entry name" value="GIDA_2"/>
    <property type="match status" value="1"/>
</dbReference>
<proteinExistence type="inferred from homology"/>
<accession>A8HAH4</accession>
<sequence>MQFHERFDVIVVGGGHAGTEAALASARMGSKTLLLTHNIDTLGQMSCNPAIGGIGKGHLVKEIDALGGAMAVATDFAGIQFRTLNSSKGPAVRATRAQADRALYRHKIQEILQHQANLRIFQQAVDDLVVENGKVVGVVTQMGLAFEAPAVVLTAGTFLGGKIHIGLENYSGGRAGDPPAIALAHRLRELPIRVGRLKTGTPPRIDANTIDFSQMTEQKGDDPLPVMSFIGDVNDHPEQVSCHITHTNERTHDIIRGGLDRSPMYSGIIEGIGPRYCPSIEDKVNRFADKTSHQIFIEPEGLNTTEIYPNGISTSLPFDVQLNLVRSIKGMENAEIMRPGYAIEYDYFDPRDLKNSLETKTIAGLFFAGQINGTTGYEEAGAQGLLAGMNASLQVQGKEAWCPRRDQAYLGVLVDDLSTLGTKEPYRMFTSRAEYRLLLREDNADLRLTEKGRELGLVDDNRWALFSEKMESIETELQRLRGQWVHPNSPLVEALNPHLNTPITREATFEDLLRRPEMDYPKLMSIDGFGPSLEDQRAAEQVQIQVKYSGYIQRQQGEIDKAIRHETTLLPLDLDYQEVPGLSNEVIAKMNEHKPETIGQASRISGMTPAAISILLVHLKKRGLLRKSA</sequence>
<gene>
    <name evidence="1" type="primary">mnmG</name>
    <name evidence="1" type="synonym">gidA</name>
    <name type="ordered locus">Spea_4251</name>
</gene>
<keyword id="KW-0963">Cytoplasm</keyword>
<keyword id="KW-0274">FAD</keyword>
<keyword id="KW-0285">Flavoprotein</keyword>
<keyword id="KW-0520">NAD</keyword>
<keyword id="KW-1185">Reference proteome</keyword>
<keyword id="KW-0819">tRNA processing</keyword>
<comment type="function">
    <text evidence="1">NAD-binding protein involved in the addition of a carboxymethylaminomethyl (cmnm) group at the wobble position (U34) of certain tRNAs, forming tRNA-cmnm(5)s(2)U34.</text>
</comment>
<comment type="cofactor">
    <cofactor evidence="1">
        <name>FAD</name>
        <dbReference type="ChEBI" id="CHEBI:57692"/>
    </cofactor>
</comment>
<comment type="subunit">
    <text evidence="1">Homodimer. Heterotetramer of two MnmE and two MnmG subunits.</text>
</comment>
<comment type="subcellular location">
    <subcellularLocation>
        <location evidence="1">Cytoplasm</location>
    </subcellularLocation>
</comment>
<comment type="similarity">
    <text evidence="1">Belongs to the MnmG family.</text>
</comment>
<reference key="1">
    <citation type="submission" date="2007-10" db="EMBL/GenBank/DDBJ databases">
        <title>Complete sequence of Shewanella pealeana ATCC 700345.</title>
        <authorList>
            <consortium name="US DOE Joint Genome Institute"/>
            <person name="Copeland A."/>
            <person name="Lucas S."/>
            <person name="Lapidus A."/>
            <person name="Barry K."/>
            <person name="Glavina del Rio T."/>
            <person name="Dalin E."/>
            <person name="Tice H."/>
            <person name="Pitluck S."/>
            <person name="Chertkov O."/>
            <person name="Brettin T."/>
            <person name="Bruce D."/>
            <person name="Detter J.C."/>
            <person name="Han C."/>
            <person name="Schmutz J."/>
            <person name="Larimer F."/>
            <person name="Land M."/>
            <person name="Hauser L."/>
            <person name="Kyrpides N."/>
            <person name="Kim E."/>
            <person name="Zhao J.-S.Z."/>
            <person name="Manno D."/>
            <person name="Hawari J."/>
            <person name="Richardson P."/>
        </authorList>
    </citation>
    <scope>NUCLEOTIDE SEQUENCE [LARGE SCALE GENOMIC DNA]</scope>
    <source>
        <strain>ATCC 700345 / ANG-SQ1</strain>
    </source>
</reference>
<protein>
    <recommendedName>
        <fullName evidence="1">tRNA uridine 5-carboxymethylaminomethyl modification enzyme MnmG</fullName>
    </recommendedName>
    <alternativeName>
        <fullName evidence="1">Glucose-inhibited division protein A</fullName>
    </alternativeName>
</protein>
<organism>
    <name type="scientific">Shewanella pealeana (strain ATCC 700345 / ANG-SQ1)</name>
    <dbReference type="NCBI Taxonomy" id="398579"/>
    <lineage>
        <taxon>Bacteria</taxon>
        <taxon>Pseudomonadati</taxon>
        <taxon>Pseudomonadota</taxon>
        <taxon>Gammaproteobacteria</taxon>
        <taxon>Alteromonadales</taxon>
        <taxon>Shewanellaceae</taxon>
        <taxon>Shewanella</taxon>
    </lineage>
</organism>
<feature type="chain" id="PRO_1000076332" description="tRNA uridine 5-carboxymethylaminomethyl modification enzyme MnmG">
    <location>
        <begin position="1"/>
        <end position="629"/>
    </location>
</feature>
<feature type="binding site" evidence="1">
    <location>
        <begin position="13"/>
        <end position="18"/>
    </location>
    <ligand>
        <name>FAD</name>
        <dbReference type="ChEBI" id="CHEBI:57692"/>
    </ligand>
</feature>
<feature type="binding site" evidence="1">
    <location>
        <begin position="273"/>
        <end position="287"/>
    </location>
    <ligand>
        <name>NAD(+)</name>
        <dbReference type="ChEBI" id="CHEBI:57540"/>
    </ligand>
</feature>
<evidence type="ECO:0000255" key="1">
    <source>
        <dbReference type="HAMAP-Rule" id="MF_00129"/>
    </source>
</evidence>